<dbReference type="EC" id="7.1.2.2" evidence="1"/>
<dbReference type="EMBL" id="DQ317523">
    <property type="protein sequence ID" value="ABC25108.1"/>
    <property type="molecule type" value="Genomic_DNA"/>
</dbReference>
<dbReference type="RefSeq" id="YP_538748.1">
    <property type="nucleotide sequence ID" value="NC_007942.1"/>
</dbReference>
<dbReference type="SMR" id="Q2PMV0"/>
<dbReference type="FunCoup" id="Q2PMV0">
    <property type="interactions" value="603"/>
</dbReference>
<dbReference type="STRING" id="3847.Q2PMV0"/>
<dbReference type="PaxDb" id="3847-GLYMA07G33670.1"/>
<dbReference type="GeneID" id="3989272"/>
<dbReference type="KEGG" id="gmx:3989272"/>
<dbReference type="eggNOG" id="KOG1350">
    <property type="taxonomic scope" value="Eukaryota"/>
</dbReference>
<dbReference type="InParanoid" id="Q2PMV0"/>
<dbReference type="Proteomes" id="UP000008827">
    <property type="component" value="Chloroplast"/>
</dbReference>
<dbReference type="GO" id="GO:0009535">
    <property type="term" value="C:chloroplast thylakoid membrane"/>
    <property type="evidence" value="ECO:0007669"/>
    <property type="project" value="UniProtKB-SubCell"/>
</dbReference>
<dbReference type="GO" id="GO:0005739">
    <property type="term" value="C:mitochondrion"/>
    <property type="evidence" value="ECO:0007669"/>
    <property type="project" value="GOC"/>
</dbReference>
<dbReference type="GO" id="GO:0045259">
    <property type="term" value="C:proton-transporting ATP synthase complex"/>
    <property type="evidence" value="ECO:0007669"/>
    <property type="project" value="UniProtKB-KW"/>
</dbReference>
<dbReference type="GO" id="GO:0005524">
    <property type="term" value="F:ATP binding"/>
    <property type="evidence" value="ECO:0007669"/>
    <property type="project" value="UniProtKB-UniRule"/>
</dbReference>
<dbReference type="GO" id="GO:0016887">
    <property type="term" value="F:ATP hydrolysis activity"/>
    <property type="evidence" value="ECO:0007669"/>
    <property type="project" value="InterPro"/>
</dbReference>
<dbReference type="GO" id="GO:0046933">
    <property type="term" value="F:proton-transporting ATP synthase activity, rotational mechanism"/>
    <property type="evidence" value="ECO:0007669"/>
    <property type="project" value="UniProtKB-UniRule"/>
</dbReference>
<dbReference type="GO" id="GO:0042776">
    <property type="term" value="P:proton motive force-driven mitochondrial ATP synthesis"/>
    <property type="evidence" value="ECO:0000318"/>
    <property type="project" value="GO_Central"/>
</dbReference>
<dbReference type="CDD" id="cd18110">
    <property type="entry name" value="ATP-synt_F1_beta_C"/>
    <property type="match status" value="1"/>
</dbReference>
<dbReference type="CDD" id="cd18115">
    <property type="entry name" value="ATP-synt_F1_beta_N"/>
    <property type="match status" value="1"/>
</dbReference>
<dbReference type="CDD" id="cd01133">
    <property type="entry name" value="F1-ATPase_beta_CD"/>
    <property type="match status" value="1"/>
</dbReference>
<dbReference type="FunFam" id="1.10.1140.10:FF:000001">
    <property type="entry name" value="ATP synthase subunit beta"/>
    <property type="match status" value="1"/>
</dbReference>
<dbReference type="FunFam" id="3.40.50.300:FF:000004">
    <property type="entry name" value="ATP synthase subunit beta"/>
    <property type="match status" value="1"/>
</dbReference>
<dbReference type="FunFam" id="2.40.10.170:FF:000002">
    <property type="entry name" value="ATP synthase subunit beta, chloroplastic"/>
    <property type="match status" value="1"/>
</dbReference>
<dbReference type="Gene3D" id="2.40.10.170">
    <property type="match status" value="1"/>
</dbReference>
<dbReference type="Gene3D" id="1.10.1140.10">
    <property type="entry name" value="Bovine Mitochondrial F1-atpase, Atp Synthase Beta Chain, Chain D, domain 3"/>
    <property type="match status" value="1"/>
</dbReference>
<dbReference type="Gene3D" id="3.40.50.300">
    <property type="entry name" value="P-loop containing nucleotide triphosphate hydrolases"/>
    <property type="match status" value="1"/>
</dbReference>
<dbReference type="HAMAP" id="MF_01347">
    <property type="entry name" value="ATP_synth_beta_bact"/>
    <property type="match status" value="1"/>
</dbReference>
<dbReference type="InterPro" id="IPR003593">
    <property type="entry name" value="AAA+_ATPase"/>
</dbReference>
<dbReference type="InterPro" id="IPR055190">
    <property type="entry name" value="ATP-synt_VA_C"/>
</dbReference>
<dbReference type="InterPro" id="IPR005722">
    <property type="entry name" value="ATP_synth_F1_bsu"/>
</dbReference>
<dbReference type="InterPro" id="IPR020003">
    <property type="entry name" value="ATPase_a/bsu_AS"/>
</dbReference>
<dbReference type="InterPro" id="IPR050053">
    <property type="entry name" value="ATPase_alpha/beta_chains"/>
</dbReference>
<dbReference type="InterPro" id="IPR004100">
    <property type="entry name" value="ATPase_F1/V1/A1_a/bsu_N"/>
</dbReference>
<dbReference type="InterPro" id="IPR036121">
    <property type="entry name" value="ATPase_F1/V1/A1_a/bsu_N_sf"/>
</dbReference>
<dbReference type="InterPro" id="IPR000194">
    <property type="entry name" value="ATPase_F1/V1/A1_a/bsu_nucl-bd"/>
</dbReference>
<dbReference type="InterPro" id="IPR024034">
    <property type="entry name" value="ATPase_F1/V1_b/a_C"/>
</dbReference>
<dbReference type="InterPro" id="IPR027417">
    <property type="entry name" value="P-loop_NTPase"/>
</dbReference>
<dbReference type="NCBIfam" id="TIGR01039">
    <property type="entry name" value="atpD"/>
    <property type="match status" value="1"/>
</dbReference>
<dbReference type="PANTHER" id="PTHR15184">
    <property type="entry name" value="ATP SYNTHASE"/>
    <property type="match status" value="1"/>
</dbReference>
<dbReference type="PANTHER" id="PTHR15184:SF71">
    <property type="entry name" value="ATP SYNTHASE SUBUNIT BETA, MITOCHONDRIAL"/>
    <property type="match status" value="1"/>
</dbReference>
<dbReference type="Pfam" id="PF00006">
    <property type="entry name" value="ATP-synt_ab"/>
    <property type="match status" value="1"/>
</dbReference>
<dbReference type="Pfam" id="PF02874">
    <property type="entry name" value="ATP-synt_ab_N"/>
    <property type="match status" value="1"/>
</dbReference>
<dbReference type="Pfam" id="PF22919">
    <property type="entry name" value="ATP-synt_VA_C"/>
    <property type="match status" value="1"/>
</dbReference>
<dbReference type="SMART" id="SM00382">
    <property type="entry name" value="AAA"/>
    <property type="match status" value="1"/>
</dbReference>
<dbReference type="SUPFAM" id="SSF47917">
    <property type="entry name" value="C-terminal domain of alpha and beta subunits of F1 ATP synthase"/>
    <property type="match status" value="1"/>
</dbReference>
<dbReference type="SUPFAM" id="SSF50615">
    <property type="entry name" value="N-terminal domain of alpha and beta subunits of F1 ATP synthase"/>
    <property type="match status" value="1"/>
</dbReference>
<dbReference type="SUPFAM" id="SSF52540">
    <property type="entry name" value="P-loop containing nucleoside triphosphate hydrolases"/>
    <property type="match status" value="1"/>
</dbReference>
<dbReference type="PROSITE" id="PS00152">
    <property type="entry name" value="ATPASE_ALPHA_BETA"/>
    <property type="match status" value="1"/>
</dbReference>
<reference key="1">
    <citation type="journal article" date="2005" name="Plant Mol. Biol.">
        <title>Complete chloroplast genome sequence of Glycine max and comparative analyses with other legume genomes.</title>
        <authorList>
            <person name="Saski C."/>
            <person name="Lee S.-B."/>
            <person name="Daniell H."/>
            <person name="Wood T.C."/>
            <person name="Tomkins J."/>
            <person name="Kim H.-G."/>
            <person name="Jansen R.K."/>
        </authorList>
    </citation>
    <scope>NUCLEOTIDE SEQUENCE [LARGE SCALE GENOMIC DNA]</scope>
    <source>
        <strain>cv. PI 437654</strain>
    </source>
</reference>
<sequence length="498" mass="53755">MRINPTTSGPEVSALEKKNLGRIAQIIGPVLDVAFPPGKMPNIYNALIVKGRDTVGQQINVTCEVQQLLGNNRIRAVAMSATEGLMRGMEVIDTGAALSVPVGGATLGRIFNVLGEPIDNLGPVDTRTTSPIHRSAPAFIQLDTKLAIFETGIKVVDLLAPYRRGGKIGLFGGAGVGKTVLIMELINNIAKAHGGVSVFGGVGERTREGNDLYMEMKESGVINEQNIAESKVALVYGQMNEPPGARMRVGLTALTMAEYFRDVNEQDVLLFIDNIFRFVQAGSEVSALLGRMPSAVGYQPTLSTEMGSLQERITSTKEGSITSIQAVYVPADDLTDPAPATTFAHLDATTVLSRGLAAKGIYPAVDPLDSTSTMLQPRIVGEEHYETAQRVKQTLQRYKELQDIIAILGLDELSEEDRLTVARARKIERFLSQPFFVAEVFTGSPGKYVSLAETIRGFKLILSGELDGLPEQAFYLVGNIDEATAKATNLEMESNLKK</sequence>
<gene>
    <name evidence="1" type="primary">atpB</name>
</gene>
<comment type="function">
    <text evidence="1">Produces ATP from ADP in the presence of a proton gradient across the membrane. The catalytic sites are hosted primarily by the beta subunits.</text>
</comment>
<comment type="catalytic activity">
    <reaction evidence="1">
        <text>ATP + H2O + 4 H(+)(in) = ADP + phosphate + 5 H(+)(out)</text>
        <dbReference type="Rhea" id="RHEA:57720"/>
        <dbReference type="ChEBI" id="CHEBI:15377"/>
        <dbReference type="ChEBI" id="CHEBI:15378"/>
        <dbReference type="ChEBI" id="CHEBI:30616"/>
        <dbReference type="ChEBI" id="CHEBI:43474"/>
        <dbReference type="ChEBI" id="CHEBI:456216"/>
        <dbReference type="EC" id="7.1.2.2"/>
    </reaction>
</comment>
<comment type="subunit">
    <text evidence="1">F-type ATPases have 2 components, CF(1) - the catalytic core - and CF(0) - the membrane proton channel. CF(1) has five subunits: alpha(3), beta(3), gamma(1), delta(1), epsilon(1). CF(0) has four main subunits: a(1), b(1), b'(1) and c(9-12).</text>
</comment>
<comment type="subcellular location">
    <subcellularLocation>
        <location evidence="1">Plastid</location>
        <location evidence="1">Chloroplast thylakoid membrane</location>
        <topology evidence="1">Peripheral membrane protein</topology>
    </subcellularLocation>
</comment>
<comment type="similarity">
    <text evidence="1">Belongs to the ATPase alpha/beta chains family.</text>
</comment>
<proteinExistence type="inferred from homology"/>
<evidence type="ECO:0000255" key="1">
    <source>
        <dbReference type="HAMAP-Rule" id="MF_01347"/>
    </source>
</evidence>
<organism>
    <name type="scientific">Glycine max</name>
    <name type="common">Soybean</name>
    <name type="synonym">Glycine hispida</name>
    <dbReference type="NCBI Taxonomy" id="3847"/>
    <lineage>
        <taxon>Eukaryota</taxon>
        <taxon>Viridiplantae</taxon>
        <taxon>Streptophyta</taxon>
        <taxon>Embryophyta</taxon>
        <taxon>Tracheophyta</taxon>
        <taxon>Spermatophyta</taxon>
        <taxon>Magnoliopsida</taxon>
        <taxon>eudicotyledons</taxon>
        <taxon>Gunneridae</taxon>
        <taxon>Pentapetalae</taxon>
        <taxon>rosids</taxon>
        <taxon>fabids</taxon>
        <taxon>Fabales</taxon>
        <taxon>Fabaceae</taxon>
        <taxon>Papilionoideae</taxon>
        <taxon>50 kb inversion clade</taxon>
        <taxon>NPAAA clade</taxon>
        <taxon>indigoferoid/millettioid clade</taxon>
        <taxon>Phaseoleae</taxon>
        <taxon>Glycine</taxon>
        <taxon>Glycine subgen. Soja</taxon>
    </lineage>
</organism>
<keyword id="KW-0066">ATP synthesis</keyword>
<keyword id="KW-0067">ATP-binding</keyword>
<keyword id="KW-0139">CF(1)</keyword>
<keyword id="KW-0150">Chloroplast</keyword>
<keyword id="KW-0375">Hydrogen ion transport</keyword>
<keyword id="KW-0406">Ion transport</keyword>
<keyword id="KW-0472">Membrane</keyword>
<keyword id="KW-0547">Nucleotide-binding</keyword>
<keyword id="KW-0934">Plastid</keyword>
<keyword id="KW-1185">Reference proteome</keyword>
<keyword id="KW-0793">Thylakoid</keyword>
<keyword id="KW-1278">Translocase</keyword>
<keyword id="KW-0813">Transport</keyword>
<geneLocation type="chloroplast"/>
<name>ATPB_SOYBN</name>
<protein>
    <recommendedName>
        <fullName evidence="1">ATP synthase subunit beta, chloroplastic</fullName>
        <ecNumber evidence="1">7.1.2.2</ecNumber>
    </recommendedName>
    <alternativeName>
        <fullName evidence="1">ATP synthase F1 sector subunit beta</fullName>
    </alternativeName>
    <alternativeName>
        <fullName evidence="1">F-ATPase subunit beta</fullName>
    </alternativeName>
</protein>
<accession>Q2PMV0</accession>
<feature type="chain" id="PRO_0000254527" description="ATP synthase subunit beta, chloroplastic">
    <location>
        <begin position="1"/>
        <end position="498"/>
    </location>
</feature>
<feature type="binding site" evidence="1">
    <location>
        <begin position="172"/>
        <end position="179"/>
    </location>
    <ligand>
        <name>ATP</name>
        <dbReference type="ChEBI" id="CHEBI:30616"/>
    </ligand>
</feature>